<proteinExistence type="inferred from homology"/>
<evidence type="ECO:0000250" key="1">
    <source>
        <dbReference type="UniProtKB" id="Q9NJS1"/>
    </source>
</evidence>
<evidence type="ECO:0000255" key="2"/>
<evidence type="ECO:0000255" key="3">
    <source>
        <dbReference type="PROSITE-ProRule" id="PRU00498"/>
    </source>
</evidence>
<evidence type="ECO:0000256" key="4">
    <source>
        <dbReference type="SAM" id="MobiDB-lite"/>
    </source>
</evidence>
<evidence type="ECO:0000269" key="5">
    <source>
    </source>
</evidence>
<evidence type="ECO:0000305" key="6"/>
<evidence type="ECO:0000312" key="7">
    <source>
        <dbReference type="EMBL" id="AAO06834.1"/>
    </source>
</evidence>
<evidence type="ECO:0000312" key="8">
    <source>
        <dbReference type="Proteomes" id="UP000076408"/>
    </source>
</evidence>
<accession>Q8I6P7</accession>
<feature type="signal peptide" evidence="2">
    <location>
        <begin position="1"/>
        <end position="21"/>
    </location>
</feature>
<feature type="chain" id="PRO_5014588959" description="Salivary thrombin inhibitor anophelin" evidence="2">
    <location>
        <begin position="22"/>
        <end position="101"/>
    </location>
</feature>
<feature type="region of interest" description="Disordered" evidence="4">
    <location>
        <begin position="26"/>
        <end position="101"/>
    </location>
</feature>
<feature type="region of interest" description="Blocks active site cleft of host thrombin in a reverse direction compared to substrates" evidence="1">
    <location>
        <begin position="75"/>
        <end position="78"/>
    </location>
</feature>
<feature type="compositionally biased region" description="Acidic residues" evidence="4">
    <location>
        <begin position="31"/>
        <end position="40"/>
    </location>
</feature>
<feature type="compositionally biased region" description="Basic and acidic residues" evidence="4">
    <location>
        <begin position="75"/>
        <end position="87"/>
    </location>
</feature>
<feature type="compositionally biased region" description="Polar residues" evidence="4">
    <location>
        <begin position="88"/>
        <end position="101"/>
    </location>
</feature>
<feature type="glycosylation site" description="N-linked (GlcNAc...) asparagine" evidence="3">
    <location>
        <position position="90"/>
    </location>
</feature>
<dbReference type="EMBL" id="AY162243">
    <property type="protein sequence ID" value="AAO06834.1"/>
    <property type="molecule type" value="mRNA"/>
</dbReference>
<dbReference type="RefSeq" id="XP_035916027.1">
    <property type="nucleotide sequence ID" value="XM_036060134.1"/>
</dbReference>
<dbReference type="SMR" id="Q8I6P7"/>
<dbReference type="MEROPS" id="I77.001"/>
<dbReference type="EnsemblMetazoa" id="ASTE006313-RA">
    <property type="protein sequence ID" value="ASTE006313-PA"/>
    <property type="gene ID" value="ASTE006313"/>
</dbReference>
<dbReference type="EnsemblMetazoa" id="ASTEI01770-RA">
    <property type="protein sequence ID" value="ASTEI01770-PA"/>
    <property type="gene ID" value="ASTEI01770"/>
</dbReference>
<dbReference type="GeneID" id="118513849"/>
<dbReference type="VEuPathDB" id="VectorBase:ASTE006313"/>
<dbReference type="VEuPathDB" id="VectorBase:ASTEI01770"/>
<dbReference type="VEuPathDB" id="VectorBase:ASTEI20_040162"/>
<dbReference type="OMA" id="NHADTED"/>
<dbReference type="OrthoDB" id="7744148at2759"/>
<dbReference type="Proteomes" id="UP000076408">
    <property type="component" value="Unassembled WGS sequence"/>
</dbReference>
<dbReference type="GO" id="GO:0005576">
    <property type="term" value="C:extracellular region"/>
    <property type="evidence" value="ECO:0007669"/>
    <property type="project" value="UniProtKB-SubCell"/>
</dbReference>
<dbReference type="GO" id="GO:0090729">
    <property type="term" value="F:toxin activity"/>
    <property type="evidence" value="ECO:0007669"/>
    <property type="project" value="UniProtKB-KW"/>
</dbReference>
<dbReference type="InterPro" id="IPR018932">
    <property type="entry name" value="Thrombin_inhibitor_anophelin"/>
</dbReference>
<dbReference type="Pfam" id="PF10731">
    <property type="entry name" value="Anophelin"/>
    <property type="match status" value="1"/>
</dbReference>
<sequence>MASKVIVIALLCIALAAFVQGAPQYTHGEEPEYDEDDGADEPVQPHSSSNHADTEDDFDLSLLDKPYANAPENADPGRRPEFLKQHNNENQSDSSSGSTEN</sequence>
<name>SATPA_ANOST</name>
<keyword id="KW-1203">Blood coagulation cascade inhibiting toxin</keyword>
<keyword id="KW-0325">Glycoprotein</keyword>
<keyword id="KW-1199">Hemostasis impairing toxin</keyword>
<keyword id="KW-1185">Reference proteome</keyword>
<keyword id="KW-0964">Secreted</keyword>
<keyword id="KW-0732">Signal</keyword>
<keyword id="KW-0800">Toxin</keyword>
<reference evidence="7" key="1">
    <citation type="journal article" date="2003" name="Insect Biochem. Mol. Biol.">
        <title>Exploring the salivary gland transcriptome and proteome of the Anopheles stephensi mosquito.</title>
        <authorList>
            <person name="Valenzuela J.G."/>
            <person name="Francischetti I.M."/>
            <person name="Pham V.M."/>
            <person name="Garfield M.K."/>
            <person name="Ribeiro J.M."/>
        </authorList>
    </citation>
    <scope>NUCLEOTIDE SEQUENCE [LARGE SCALE MRNA]</scope>
    <source>
        <tissue evidence="7">Salivary gland</tissue>
    </source>
</reference>
<reference evidence="8" key="2">
    <citation type="journal article" date="2014" name="Genome Biol.">
        <title>Genome analysis of a major urban malaria vector mosquito, Anopheles stephensi.</title>
        <authorList>
            <person name="Jiang X."/>
            <person name="Peery A."/>
            <person name="Hall A.B."/>
            <person name="Sharma A."/>
            <person name="Chen X.G."/>
            <person name="Waterhouse R.M."/>
            <person name="Komissarov A."/>
            <person name="Riehle M.M."/>
            <person name="Shouche Y."/>
            <person name="Sharakhova M.V."/>
            <person name="Lawson D."/>
            <person name="Pakpour N."/>
            <person name="Arensburger P."/>
            <person name="Davidson V.L."/>
            <person name="Eiglmeier K."/>
            <person name="Emrich S."/>
            <person name="George P."/>
            <person name="Kennedy R.C."/>
            <person name="Mane S.P."/>
            <person name="Maslen G."/>
            <person name="Oringanje C."/>
            <person name="Qi Y."/>
            <person name="Settlage R."/>
            <person name="Tojo M."/>
            <person name="Tubio J.M."/>
            <person name="Unger M.F."/>
            <person name="Wang B."/>
            <person name="Vernick K.D."/>
            <person name="Ribeiro J.M."/>
            <person name="James A.A."/>
            <person name="Michel K."/>
            <person name="Riehle M.A."/>
            <person name="Luckhart S."/>
            <person name="Sharakhov I.V."/>
            <person name="Tu Z."/>
        </authorList>
    </citation>
    <scope>NUCLEOTIDE SEQUENCE [LARGE SCALE GENOMIC DNA]</scope>
    <source>
        <strain evidence="8">Indian</strain>
    </source>
</reference>
<reference evidence="6" key="3">
    <citation type="journal article" date="2012" name="Proc. Natl. Acad. Sci. U.S.A.">
        <title>Unique thrombin inhibition mechanism by anophelin, an anticoagulant from the malaria vector.</title>
        <authorList>
            <person name="Figueiredo A.C."/>
            <person name="de Sanctis D."/>
            <person name="Gutierrez-Gallego R."/>
            <person name="Cereija T.B."/>
            <person name="Macedo-Ribeiro S."/>
            <person name="Fuentes-Prior P."/>
            <person name="Pereira P.J."/>
        </authorList>
    </citation>
    <scope>FUNCTION</scope>
</reference>
<organism evidence="7">
    <name type="scientific">Anopheles stephensi</name>
    <name type="common">Indo-Pakistan malaria mosquito</name>
    <dbReference type="NCBI Taxonomy" id="30069"/>
    <lineage>
        <taxon>Eukaryota</taxon>
        <taxon>Metazoa</taxon>
        <taxon>Ecdysozoa</taxon>
        <taxon>Arthropoda</taxon>
        <taxon>Hexapoda</taxon>
        <taxon>Insecta</taxon>
        <taxon>Pterygota</taxon>
        <taxon>Neoptera</taxon>
        <taxon>Endopterygota</taxon>
        <taxon>Diptera</taxon>
        <taxon>Nematocera</taxon>
        <taxon>Culicoidea</taxon>
        <taxon>Culicidae</taxon>
        <taxon>Anophelinae</taxon>
        <taxon>Anopheles</taxon>
    </lineage>
</organism>
<comment type="function">
    <text evidence="5">Salivary protein with anticoagulant activity that inhibits host thrombin (F2).</text>
</comment>
<comment type="subunit">
    <text evidence="1">Interacts with human F2 (thrombin); the interaction results in thrombin inhibition.</text>
</comment>
<comment type="subcellular location">
    <subcellularLocation>
        <location evidence="6">Secreted</location>
    </subcellularLocation>
</comment>
<comment type="similarity">
    <text evidence="6">Belongs to the anophelin family.</text>
</comment>
<protein>
    <recommendedName>
        <fullName evidence="6">Salivary thrombin inhibitor anophelin</fullName>
    </recommendedName>
</protein>